<name>RL7_AERHH</name>
<evidence type="ECO:0000255" key="1">
    <source>
        <dbReference type="HAMAP-Rule" id="MF_00368"/>
    </source>
</evidence>
<evidence type="ECO:0000305" key="2"/>
<comment type="function">
    <text evidence="1">Forms part of the ribosomal stalk which helps the ribosome interact with GTP-bound translation factors. Is thus essential for accurate translation.</text>
</comment>
<comment type="subunit">
    <text evidence="1">Homodimer. Part of the ribosomal stalk of the 50S ribosomal subunit. Forms a multimeric L10(L12)X complex, where L10 forms an elongated spine to which 2 to 4 L12 dimers bind in a sequential fashion. Binds GTP-bound translation factors.</text>
</comment>
<comment type="similarity">
    <text evidence="1">Belongs to the bacterial ribosomal protein bL12 family.</text>
</comment>
<accession>A0KQA6</accession>
<gene>
    <name evidence="1" type="primary">rplL</name>
    <name type="ordered locus">AHA_4029</name>
</gene>
<dbReference type="EMBL" id="CP000462">
    <property type="protein sequence ID" value="ABK39159.1"/>
    <property type="molecule type" value="Genomic_DNA"/>
</dbReference>
<dbReference type="RefSeq" id="WP_011707702.1">
    <property type="nucleotide sequence ID" value="NC_008570.1"/>
</dbReference>
<dbReference type="RefSeq" id="YP_858457.1">
    <property type="nucleotide sequence ID" value="NC_008570.1"/>
</dbReference>
<dbReference type="SMR" id="A0KQA6"/>
<dbReference type="STRING" id="380703.AHA_4029"/>
<dbReference type="EnsemblBacteria" id="ABK39159">
    <property type="protein sequence ID" value="ABK39159"/>
    <property type="gene ID" value="AHA_4029"/>
</dbReference>
<dbReference type="GeneID" id="69551472"/>
<dbReference type="KEGG" id="aha:AHA_4029"/>
<dbReference type="PATRIC" id="fig|380703.7.peg.3989"/>
<dbReference type="eggNOG" id="COG0222">
    <property type="taxonomic scope" value="Bacteria"/>
</dbReference>
<dbReference type="HOGENOM" id="CLU_086499_3_2_6"/>
<dbReference type="OrthoDB" id="9811748at2"/>
<dbReference type="Proteomes" id="UP000000756">
    <property type="component" value="Chromosome"/>
</dbReference>
<dbReference type="GO" id="GO:0022625">
    <property type="term" value="C:cytosolic large ribosomal subunit"/>
    <property type="evidence" value="ECO:0007669"/>
    <property type="project" value="TreeGrafter"/>
</dbReference>
<dbReference type="GO" id="GO:0003729">
    <property type="term" value="F:mRNA binding"/>
    <property type="evidence" value="ECO:0007669"/>
    <property type="project" value="TreeGrafter"/>
</dbReference>
<dbReference type="GO" id="GO:0003735">
    <property type="term" value="F:structural constituent of ribosome"/>
    <property type="evidence" value="ECO:0007669"/>
    <property type="project" value="InterPro"/>
</dbReference>
<dbReference type="GO" id="GO:0006412">
    <property type="term" value="P:translation"/>
    <property type="evidence" value="ECO:0007669"/>
    <property type="project" value="UniProtKB-UniRule"/>
</dbReference>
<dbReference type="CDD" id="cd00387">
    <property type="entry name" value="Ribosomal_L7_L12"/>
    <property type="match status" value="1"/>
</dbReference>
<dbReference type="FunFam" id="1.20.5.710:FF:000001">
    <property type="entry name" value="50S ribosomal protein L7/L12"/>
    <property type="match status" value="1"/>
</dbReference>
<dbReference type="FunFam" id="3.30.1390.10:FF:000001">
    <property type="entry name" value="50S ribosomal protein L7/L12"/>
    <property type="match status" value="1"/>
</dbReference>
<dbReference type="Gene3D" id="3.30.1390.10">
    <property type="match status" value="1"/>
</dbReference>
<dbReference type="Gene3D" id="1.20.5.710">
    <property type="entry name" value="Single helix bin"/>
    <property type="match status" value="1"/>
</dbReference>
<dbReference type="HAMAP" id="MF_00368">
    <property type="entry name" value="Ribosomal_bL12"/>
    <property type="match status" value="1"/>
</dbReference>
<dbReference type="InterPro" id="IPR000206">
    <property type="entry name" value="Ribosomal_bL12"/>
</dbReference>
<dbReference type="InterPro" id="IPR013823">
    <property type="entry name" value="Ribosomal_bL12_C"/>
</dbReference>
<dbReference type="InterPro" id="IPR014719">
    <property type="entry name" value="Ribosomal_bL12_C/ClpS-like"/>
</dbReference>
<dbReference type="InterPro" id="IPR008932">
    <property type="entry name" value="Ribosomal_bL12_oligo"/>
</dbReference>
<dbReference type="InterPro" id="IPR036235">
    <property type="entry name" value="Ribosomal_bL12_oligo_N_sf"/>
</dbReference>
<dbReference type="NCBIfam" id="TIGR00855">
    <property type="entry name" value="L12"/>
    <property type="match status" value="1"/>
</dbReference>
<dbReference type="PANTHER" id="PTHR45987">
    <property type="entry name" value="39S RIBOSOMAL PROTEIN L12"/>
    <property type="match status" value="1"/>
</dbReference>
<dbReference type="PANTHER" id="PTHR45987:SF4">
    <property type="entry name" value="LARGE RIBOSOMAL SUBUNIT PROTEIN BL12M"/>
    <property type="match status" value="1"/>
</dbReference>
<dbReference type="Pfam" id="PF00542">
    <property type="entry name" value="Ribosomal_L12"/>
    <property type="match status" value="1"/>
</dbReference>
<dbReference type="Pfam" id="PF16320">
    <property type="entry name" value="Ribosomal_L12_N"/>
    <property type="match status" value="1"/>
</dbReference>
<dbReference type="SUPFAM" id="SSF54736">
    <property type="entry name" value="ClpS-like"/>
    <property type="match status" value="1"/>
</dbReference>
<dbReference type="SUPFAM" id="SSF48300">
    <property type="entry name" value="Ribosomal protein L7/12, oligomerisation (N-terminal) domain"/>
    <property type="match status" value="1"/>
</dbReference>
<keyword id="KW-1185">Reference proteome</keyword>
<keyword id="KW-0687">Ribonucleoprotein</keyword>
<keyword id="KW-0689">Ribosomal protein</keyword>
<proteinExistence type="inferred from homology"/>
<feature type="chain" id="PRO_1000006952" description="Large ribosomal subunit protein bL12">
    <location>
        <begin position="1"/>
        <end position="121"/>
    </location>
</feature>
<protein>
    <recommendedName>
        <fullName evidence="1">Large ribosomal subunit protein bL12</fullName>
    </recommendedName>
    <alternativeName>
        <fullName evidence="2">50S ribosomal protein L7/L12</fullName>
    </alternativeName>
</protein>
<reference key="1">
    <citation type="journal article" date="2006" name="J. Bacteriol.">
        <title>Genome sequence of Aeromonas hydrophila ATCC 7966T: jack of all trades.</title>
        <authorList>
            <person name="Seshadri R."/>
            <person name="Joseph S.W."/>
            <person name="Chopra A.K."/>
            <person name="Sha J."/>
            <person name="Shaw J."/>
            <person name="Graf J."/>
            <person name="Haft D.H."/>
            <person name="Wu M."/>
            <person name="Ren Q."/>
            <person name="Rosovitz M.J."/>
            <person name="Madupu R."/>
            <person name="Tallon L."/>
            <person name="Kim M."/>
            <person name="Jin S."/>
            <person name="Vuong H."/>
            <person name="Stine O.C."/>
            <person name="Ali A."/>
            <person name="Horneman A.J."/>
            <person name="Heidelberg J.F."/>
        </authorList>
    </citation>
    <scope>NUCLEOTIDE SEQUENCE [LARGE SCALE GENOMIC DNA]</scope>
    <source>
        <strain>ATCC 7966 / DSM 30187 / BCRC 13018 / CCUG 14551 / JCM 1027 / KCTC 2358 / NCIMB 9240 / NCTC 8049</strain>
    </source>
</reference>
<sequence>MSITKDQIIEAVASMSVMEVVELIEAMEEKFGVSAAAAVMAGPAAAEAVEEKTEFDVVLTAAGANKVAVIKAVRGATGLGLKEAKDLVEAAPANLKEAVSKDEAEALKKELEAAGASVEIK</sequence>
<organism>
    <name type="scientific">Aeromonas hydrophila subsp. hydrophila (strain ATCC 7966 / DSM 30187 / BCRC 13018 / CCUG 14551 / JCM 1027 / KCTC 2358 / NCIMB 9240 / NCTC 8049)</name>
    <dbReference type="NCBI Taxonomy" id="380703"/>
    <lineage>
        <taxon>Bacteria</taxon>
        <taxon>Pseudomonadati</taxon>
        <taxon>Pseudomonadota</taxon>
        <taxon>Gammaproteobacteria</taxon>
        <taxon>Aeromonadales</taxon>
        <taxon>Aeromonadaceae</taxon>
        <taxon>Aeromonas</taxon>
    </lineage>
</organism>